<organism>
    <name type="scientific">Canis lupus familiaris</name>
    <name type="common">Dog</name>
    <name type="synonym">Canis familiaris</name>
    <dbReference type="NCBI Taxonomy" id="9615"/>
    <lineage>
        <taxon>Eukaryota</taxon>
        <taxon>Metazoa</taxon>
        <taxon>Chordata</taxon>
        <taxon>Craniata</taxon>
        <taxon>Vertebrata</taxon>
        <taxon>Euteleostomi</taxon>
        <taxon>Mammalia</taxon>
        <taxon>Eutheria</taxon>
        <taxon>Laurasiatheria</taxon>
        <taxon>Carnivora</taxon>
        <taxon>Caniformia</taxon>
        <taxon>Canidae</taxon>
        <taxon>Canis</taxon>
    </lineage>
</organism>
<accession>Q95LA2</accession>
<dbReference type="EC" id="1.14.13.148" evidence="2"/>
<dbReference type="EC" id="1.14.13.8" evidence="3"/>
<dbReference type="EMBL" id="AF384053">
    <property type="protein sequence ID" value="AAK97433.1"/>
    <property type="molecule type" value="mRNA"/>
</dbReference>
<dbReference type="RefSeq" id="NP_001003061.1">
    <property type="nucleotide sequence ID" value="NM_001003061.1"/>
</dbReference>
<dbReference type="RefSeq" id="XP_005622281.1">
    <property type="nucleotide sequence ID" value="XM_005622224.2"/>
</dbReference>
<dbReference type="RefSeq" id="XP_038526409.1">
    <property type="nucleotide sequence ID" value="XM_038670481.1"/>
</dbReference>
<dbReference type="SMR" id="Q95LA2"/>
<dbReference type="FunCoup" id="Q95LA2">
    <property type="interactions" value="19"/>
</dbReference>
<dbReference type="STRING" id="9615.ENSCAFP00000022051"/>
<dbReference type="PaxDb" id="9612-ENSCAFP00000022051"/>
<dbReference type="Ensembl" id="ENSCAFT00000023758.3">
    <property type="protein sequence ID" value="ENSCAFP00000022051.2"/>
    <property type="gene ID" value="ENSCAFG00000014982.5"/>
</dbReference>
<dbReference type="Ensembl" id="ENSCAFT00030000380.1">
    <property type="protein sequence ID" value="ENSCAFP00030000331.1"/>
    <property type="gene ID" value="ENSCAFG00030000236.1"/>
</dbReference>
<dbReference type="Ensembl" id="ENSCAFT00040028004.1">
    <property type="protein sequence ID" value="ENSCAFP00040024320.1"/>
    <property type="gene ID" value="ENSCAFG00040015175.1"/>
</dbReference>
<dbReference type="Ensembl" id="ENSCAFT00845002360.1">
    <property type="protein sequence ID" value="ENSCAFP00845001876.1"/>
    <property type="gene ID" value="ENSCAFG00845001369.1"/>
</dbReference>
<dbReference type="GeneID" id="403604"/>
<dbReference type="KEGG" id="cfa:403604"/>
<dbReference type="CTD" id="2326"/>
<dbReference type="VEuPathDB" id="HostDB:ENSCAFG00845001369"/>
<dbReference type="VGNC" id="VGNC:40916">
    <property type="gene designation" value="FMO1"/>
</dbReference>
<dbReference type="eggNOG" id="KOG1399">
    <property type="taxonomic scope" value="Eukaryota"/>
</dbReference>
<dbReference type="GeneTree" id="ENSGT00940000160945"/>
<dbReference type="HOGENOM" id="CLU_006909_8_2_1"/>
<dbReference type="InParanoid" id="Q95LA2"/>
<dbReference type="OMA" id="VMIKEVN"/>
<dbReference type="OrthoDB" id="66881at2759"/>
<dbReference type="TreeFam" id="TF105285"/>
<dbReference type="Reactome" id="R-CFA-1614558">
    <property type="pathway name" value="Degradation of cysteine and homocysteine"/>
</dbReference>
<dbReference type="Reactome" id="R-CFA-217271">
    <property type="pathway name" value="FMO oxidises nucleophiles"/>
</dbReference>
<dbReference type="Proteomes" id="UP000002254">
    <property type="component" value="Chromosome 7"/>
</dbReference>
<dbReference type="Proteomes" id="UP000694429">
    <property type="component" value="Chromosome 7"/>
</dbReference>
<dbReference type="Proteomes" id="UP000694542">
    <property type="component" value="Chromosome 7"/>
</dbReference>
<dbReference type="Proteomes" id="UP000805418">
    <property type="component" value="Chromosome 7"/>
</dbReference>
<dbReference type="Bgee" id="ENSCAFG00000014982">
    <property type="expression patterns" value="Expressed in liver and 16 other cell types or tissues"/>
</dbReference>
<dbReference type="GO" id="GO:0005789">
    <property type="term" value="C:endoplasmic reticulum membrane"/>
    <property type="evidence" value="ECO:0000314"/>
    <property type="project" value="UniProtKB"/>
</dbReference>
<dbReference type="GO" id="GO:0050660">
    <property type="term" value="F:flavin adenine dinucleotide binding"/>
    <property type="evidence" value="ECO:0007669"/>
    <property type="project" value="InterPro"/>
</dbReference>
<dbReference type="GO" id="GO:0047822">
    <property type="term" value="F:hypotaurine monooxygenase activity"/>
    <property type="evidence" value="ECO:0000250"/>
    <property type="project" value="UniProtKB"/>
</dbReference>
<dbReference type="GO" id="GO:0004499">
    <property type="term" value="F:N,N-dimethylaniline monooxygenase activity"/>
    <property type="evidence" value="ECO:0000318"/>
    <property type="project" value="GO_Central"/>
</dbReference>
<dbReference type="GO" id="GO:0050661">
    <property type="term" value="F:NADP binding"/>
    <property type="evidence" value="ECO:0007669"/>
    <property type="project" value="InterPro"/>
</dbReference>
<dbReference type="GO" id="GO:0034899">
    <property type="term" value="F:trimethylamine monooxygenase activity"/>
    <property type="evidence" value="ECO:0000250"/>
    <property type="project" value="UniProtKB"/>
</dbReference>
<dbReference type="GO" id="GO:0097009">
    <property type="term" value="P:energy homeostasis"/>
    <property type="evidence" value="ECO:0007669"/>
    <property type="project" value="Ensembl"/>
</dbReference>
<dbReference type="GO" id="GO:0046322">
    <property type="term" value="P:negative regulation of fatty acid oxidation"/>
    <property type="evidence" value="ECO:0007669"/>
    <property type="project" value="Ensembl"/>
</dbReference>
<dbReference type="GO" id="GO:0042412">
    <property type="term" value="P:taurine biosynthetic process"/>
    <property type="evidence" value="ECO:0000250"/>
    <property type="project" value="UniProtKB"/>
</dbReference>
<dbReference type="GO" id="GO:0009404">
    <property type="term" value="P:toxin metabolic process"/>
    <property type="evidence" value="ECO:0007669"/>
    <property type="project" value="Ensembl"/>
</dbReference>
<dbReference type="GO" id="GO:0006805">
    <property type="term" value="P:xenobiotic metabolic process"/>
    <property type="evidence" value="ECO:0007669"/>
    <property type="project" value="Ensembl"/>
</dbReference>
<dbReference type="FunFam" id="3.50.50.60:FF:000159">
    <property type="entry name" value="Dimethylaniline monooxygenase [N-oxide-forming]"/>
    <property type="match status" value="1"/>
</dbReference>
<dbReference type="Gene3D" id="3.50.50.60">
    <property type="entry name" value="FAD/NAD(P)-binding domain"/>
    <property type="match status" value="4"/>
</dbReference>
<dbReference type="InterPro" id="IPR036188">
    <property type="entry name" value="FAD/NAD-bd_sf"/>
</dbReference>
<dbReference type="InterPro" id="IPR000960">
    <property type="entry name" value="Flavin_mOase"/>
</dbReference>
<dbReference type="InterPro" id="IPR020946">
    <property type="entry name" value="Flavin_mOase-like"/>
</dbReference>
<dbReference type="InterPro" id="IPR002253">
    <property type="entry name" value="Flavin_mOase_1"/>
</dbReference>
<dbReference type="InterPro" id="IPR050346">
    <property type="entry name" value="FMO-like"/>
</dbReference>
<dbReference type="PANTHER" id="PTHR23023">
    <property type="entry name" value="DIMETHYLANILINE MONOOXYGENASE"/>
    <property type="match status" value="1"/>
</dbReference>
<dbReference type="Pfam" id="PF00743">
    <property type="entry name" value="FMO-like"/>
    <property type="match status" value="1"/>
</dbReference>
<dbReference type="PIRSF" id="PIRSF000332">
    <property type="entry name" value="FMO"/>
    <property type="match status" value="1"/>
</dbReference>
<dbReference type="PRINTS" id="PR00370">
    <property type="entry name" value="FMOXYGENASE"/>
</dbReference>
<dbReference type="PRINTS" id="PR01121">
    <property type="entry name" value="FMOXYGENASE1"/>
</dbReference>
<dbReference type="SUPFAM" id="SSF51905">
    <property type="entry name" value="FAD/NAD(P)-binding domain"/>
    <property type="match status" value="2"/>
</dbReference>
<name>FMO1_CANLF</name>
<sequence>MAKRVAIVGAGVSGLASIKCCLEEGLEPTCFERSDDLGGLWRFTEHVEEGRASLYKSVVSNSCKEMSCYSDFPFPEDYPNYVPNSQFLEYLKMYANRFSLLKCIRFKTKVCKVTKCPDFTVTGQWEVVTQHEGKQESAIFDAVMVCTGFLTNPHLPLDCFPGINTFKGQYFHSRQYKHPDIFKDKRVLVIGMGNSGTDIAVETSRLAKKVFLSTTGGAWVMSRVFDSGYPWDMVFMTRFQNMFRNSLPTPIVTWLMARKMNSWFNHANYGLVPEDRTQLREPVLNDELPGCIITGKVLIKPSIKEVKENSVVFNNTPKEEPIDIIVFATGYTFAFPFLDETVVKVENGQASLYKYIFPVHLPKPTLAVIGLIKPLGSMIPTGETQARWAVRVLKGINKLPPQSAMTEEVNARKENKPSGFGLCYCKALQSDYITYIDELLTNINAKPNLFSLLLTDPRLALTIFFGPCTPYQFRLTGPGKWKGARNAILTQWDRTFKVTKTRIVQESPTPFASLLKLLSLLALLMAIFLIFL</sequence>
<proteinExistence type="evidence at transcript level"/>
<reference key="1">
    <citation type="journal article" date="2002" name="Drug Metab. Dispos.">
        <title>Cloning, sequencing, and tissue-dependent expression of flavin-containing monooxygenase (FMO) 1 and FMO3 in the dog.</title>
        <authorList>
            <person name="Lattard V."/>
            <person name="Longin-Sauvageon C."/>
            <person name="Lachuer J."/>
            <person name="Delatour P."/>
            <person name="Benoit E."/>
        </authorList>
    </citation>
    <scope>NUCLEOTIDE SEQUENCE [MRNA]</scope>
    <scope>SUBCELLULAR LOCATION</scope>
    <scope>TISSUE SPECIFICITY</scope>
    <source>
        <tissue>Liver</tissue>
    </source>
</reference>
<keyword id="KW-0007">Acetylation</keyword>
<keyword id="KW-0256">Endoplasmic reticulum</keyword>
<keyword id="KW-0274">FAD</keyword>
<keyword id="KW-0285">Flavoprotein</keyword>
<keyword id="KW-0472">Membrane</keyword>
<keyword id="KW-0503">Monooxygenase</keyword>
<keyword id="KW-0521">NADP</keyword>
<keyword id="KW-0560">Oxidoreductase</keyword>
<keyword id="KW-1185">Reference proteome</keyword>
<keyword id="KW-0812">Transmembrane</keyword>
<keyword id="KW-1133">Transmembrane helix</keyword>
<evidence type="ECO:0000250" key="1">
    <source>
        <dbReference type="UniProtKB" id="P16549"/>
    </source>
</evidence>
<evidence type="ECO:0000250" key="2">
    <source>
        <dbReference type="UniProtKB" id="P36365"/>
    </source>
</evidence>
<evidence type="ECO:0000250" key="3">
    <source>
        <dbReference type="UniProtKB" id="Q01740"/>
    </source>
</evidence>
<evidence type="ECO:0000250" key="4">
    <source>
        <dbReference type="UniProtKB" id="Q9HFE4"/>
    </source>
</evidence>
<evidence type="ECO:0000255" key="5"/>
<evidence type="ECO:0000269" key="6">
    <source>
    </source>
</evidence>
<evidence type="ECO:0000305" key="7"/>
<comment type="function">
    <text evidence="2 3">Broad spectrum monooxygenase that catalyzes the oxygenation of a wide variety of nitrogen- and sulfur-containing compounds including xenobiotics (By similarity). Catalyzes the S-oxygenation of hypotaurine to produce taurine, an organic osmolyte involved in cell volume regulation as well as a variety of cytoprotective and developmental processes (By similarity). In vitro, catalyzes the N-oxygenation of trimethylamine (TMA) to produce trimethylamine N-oxide (TMAO) and could therefore participate to the detoxification of this compound that is generated by the action of gut microbiota from dietary precursors such as choline, choline containing compounds, betaine or L-carnitine (By similarity).</text>
</comment>
<comment type="catalytic activity">
    <reaction evidence="3">
        <text>hypotaurine + NADPH + O2 + H(+) = taurine + NADP(+) + H2O</text>
        <dbReference type="Rhea" id="RHEA:69819"/>
        <dbReference type="ChEBI" id="CHEBI:15377"/>
        <dbReference type="ChEBI" id="CHEBI:15378"/>
        <dbReference type="ChEBI" id="CHEBI:15379"/>
        <dbReference type="ChEBI" id="CHEBI:57783"/>
        <dbReference type="ChEBI" id="CHEBI:57853"/>
        <dbReference type="ChEBI" id="CHEBI:58349"/>
        <dbReference type="ChEBI" id="CHEBI:507393"/>
        <dbReference type="EC" id="1.14.13.8"/>
    </reaction>
    <physiologicalReaction direction="left-to-right" evidence="3">
        <dbReference type="Rhea" id="RHEA:69820"/>
    </physiologicalReaction>
</comment>
<comment type="catalytic activity">
    <reaction evidence="3">
        <text>hypotaurine + NADH + O2 + H(+) = taurine + NAD(+) + H2O</text>
        <dbReference type="Rhea" id="RHEA:74111"/>
        <dbReference type="ChEBI" id="CHEBI:15377"/>
        <dbReference type="ChEBI" id="CHEBI:15378"/>
        <dbReference type="ChEBI" id="CHEBI:15379"/>
        <dbReference type="ChEBI" id="CHEBI:57540"/>
        <dbReference type="ChEBI" id="CHEBI:57853"/>
        <dbReference type="ChEBI" id="CHEBI:57945"/>
        <dbReference type="ChEBI" id="CHEBI:507393"/>
        <dbReference type="EC" id="1.14.13.8"/>
    </reaction>
    <physiologicalReaction direction="left-to-right" evidence="3">
        <dbReference type="Rhea" id="RHEA:74112"/>
    </physiologicalReaction>
</comment>
<comment type="catalytic activity">
    <reaction evidence="2">
        <text>trimethylamine + NADPH + O2 = trimethylamine N-oxide + NADP(+) + H2O</text>
        <dbReference type="Rhea" id="RHEA:31979"/>
        <dbReference type="ChEBI" id="CHEBI:15377"/>
        <dbReference type="ChEBI" id="CHEBI:15379"/>
        <dbReference type="ChEBI" id="CHEBI:15724"/>
        <dbReference type="ChEBI" id="CHEBI:57783"/>
        <dbReference type="ChEBI" id="CHEBI:58349"/>
        <dbReference type="ChEBI" id="CHEBI:58389"/>
        <dbReference type="EC" id="1.14.13.148"/>
    </reaction>
    <physiologicalReaction direction="left-to-right" evidence="2">
        <dbReference type="Rhea" id="RHEA:31980"/>
    </physiologicalReaction>
</comment>
<comment type="catalytic activity">
    <reaction evidence="2">
        <text>N,N-dimethylaniline + NADPH + O2 + H(+) = N,N-dimethylaniline N-oxide + NADP(+) + H2O</text>
        <dbReference type="Rhea" id="RHEA:24468"/>
        <dbReference type="ChEBI" id="CHEBI:15377"/>
        <dbReference type="ChEBI" id="CHEBI:15378"/>
        <dbReference type="ChEBI" id="CHEBI:15379"/>
        <dbReference type="ChEBI" id="CHEBI:16269"/>
        <dbReference type="ChEBI" id="CHEBI:17735"/>
        <dbReference type="ChEBI" id="CHEBI:57783"/>
        <dbReference type="ChEBI" id="CHEBI:58349"/>
        <dbReference type="EC" id="1.14.13.8"/>
    </reaction>
    <physiologicalReaction direction="left-to-right" evidence="2">
        <dbReference type="Rhea" id="RHEA:24469"/>
    </physiologicalReaction>
</comment>
<comment type="cofactor">
    <cofactor evidence="3">
        <name>FAD</name>
        <dbReference type="ChEBI" id="CHEBI:57692"/>
    </cofactor>
</comment>
<comment type="subcellular location">
    <subcellularLocation>
        <location evidence="6">Endoplasmic reticulum membrane</location>
        <topology evidence="5">Single-pass membrane protein</topology>
    </subcellularLocation>
</comment>
<comment type="tissue specificity">
    <text evidence="6">Liver.</text>
</comment>
<comment type="similarity">
    <text evidence="7">Belongs to the FMO family.</text>
</comment>
<protein>
    <recommendedName>
        <fullName evidence="7">Flavin-containing monooxygenase 1</fullName>
        <ecNumber evidence="2">1.14.13.148</ecNumber>
        <ecNumber evidence="3">1.14.13.8</ecNumber>
    </recommendedName>
    <alternativeName>
        <fullName>Dimethylaniline monooxygenase [N-oxide-forming] 1</fullName>
    </alternativeName>
    <alternativeName>
        <fullName>Dimethylaniline oxidase 1</fullName>
    </alternativeName>
    <alternativeName>
        <fullName>Hepatic flavin-containing monooxygenase 1</fullName>
        <shortName>FMO 1</shortName>
    </alternativeName>
    <alternativeName>
        <fullName evidence="7">Trimethylamine monooxygenase</fullName>
    </alternativeName>
</protein>
<feature type="initiator methionine" description="Removed" evidence="1">
    <location>
        <position position="1"/>
    </location>
</feature>
<feature type="chain" id="PRO_0000147637" description="Flavin-containing monooxygenase 1">
    <location>
        <begin position="2"/>
        <end position="532"/>
    </location>
</feature>
<feature type="topological domain" description="Lumenal" evidence="1">
    <location>
        <begin position="2"/>
        <end position="510"/>
    </location>
</feature>
<feature type="transmembrane region" description="Helical" evidence="5">
    <location>
        <begin position="511"/>
        <end position="531"/>
    </location>
</feature>
<feature type="topological domain" description="Cytoplasmic" evidence="1">
    <location>
        <position position="532"/>
    </location>
</feature>
<feature type="binding site" evidence="4">
    <location>
        <begin position="9"/>
        <end position="13"/>
    </location>
    <ligand>
        <name>FAD</name>
        <dbReference type="ChEBI" id="CHEBI:57692"/>
    </ligand>
</feature>
<feature type="binding site" evidence="4">
    <location>
        <position position="32"/>
    </location>
    <ligand>
        <name>FAD</name>
        <dbReference type="ChEBI" id="CHEBI:57692"/>
    </ligand>
</feature>
<feature type="binding site" evidence="4">
    <location>
        <begin position="40"/>
        <end position="41"/>
    </location>
    <ligand>
        <name>FAD</name>
        <dbReference type="ChEBI" id="CHEBI:57692"/>
    </ligand>
</feature>
<feature type="binding site" evidence="4">
    <location>
        <begin position="60"/>
        <end position="61"/>
    </location>
    <ligand>
        <name>NADP(+)</name>
        <dbReference type="ChEBI" id="CHEBI:58349"/>
    </ligand>
</feature>
<feature type="binding site" evidence="4">
    <location>
        <begin position="61"/>
        <end position="62"/>
    </location>
    <ligand>
        <name>FAD</name>
        <dbReference type="ChEBI" id="CHEBI:57692"/>
    </ligand>
</feature>
<feature type="binding site" evidence="4">
    <location>
        <begin position="195"/>
        <end position="198"/>
    </location>
    <ligand>
        <name>NADP(+)</name>
        <dbReference type="ChEBI" id="CHEBI:58349"/>
    </ligand>
</feature>
<feature type="site" description="Important for substrate binding" evidence="1">
    <location>
        <position position="208"/>
    </location>
</feature>
<feature type="modified residue" description="N-acetylalanine" evidence="1">
    <location>
        <position position="2"/>
    </location>
</feature>
<gene>
    <name type="primary">FMO1</name>
</gene>